<protein>
    <recommendedName>
        <fullName evidence="12">Calmodulin-binding transcription activator 4</fullName>
        <shortName evidence="12">AtCAMTA4</shortName>
    </recommendedName>
    <alternativeName>
        <fullName evidence="10">AtFIN21</fullName>
    </alternativeName>
    <alternativeName>
        <fullName evidence="18">Ethylene-induced calmodulin-binding protein 4</fullName>
        <shortName evidence="18">EICBP4</shortName>
    </alternativeName>
    <alternativeName>
        <fullName evidence="11">Ethylene-induced calmodulin-binding protein d</fullName>
        <shortName evidence="11">EICBP.d</shortName>
    </alternativeName>
    <alternativeName>
        <fullName evidence="13">Signal-responsive protein 5</fullName>
        <shortName evidence="13">AtSR5</shortName>
    </alternativeName>
</protein>
<reference key="1">
    <citation type="submission" date="2003-12" db="EMBL/GenBank/DDBJ databases">
        <title>A calmodulin-binding protein from Arabidopsis.</title>
        <authorList>
            <person name="Reddy V.S."/>
            <person name="Reddy A.S.N."/>
        </authorList>
    </citation>
    <scope>NUCLEOTIDE SEQUENCE [MRNA]</scope>
</reference>
<reference key="2">
    <citation type="journal article" date="2000" name="Nature">
        <title>Sequence and analysis of chromosome 1 of the plant Arabidopsis thaliana.</title>
        <authorList>
            <person name="Theologis A."/>
            <person name="Ecker J.R."/>
            <person name="Palm C.J."/>
            <person name="Federspiel N.A."/>
            <person name="Kaul S."/>
            <person name="White O."/>
            <person name="Alonso J."/>
            <person name="Altafi H."/>
            <person name="Araujo R."/>
            <person name="Bowman C.L."/>
            <person name="Brooks S.Y."/>
            <person name="Buehler E."/>
            <person name="Chan A."/>
            <person name="Chao Q."/>
            <person name="Chen H."/>
            <person name="Cheuk R.F."/>
            <person name="Chin C.W."/>
            <person name="Chung M.K."/>
            <person name="Conn L."/>
            <person name="Conway A.B."/>
            <person name="Conway A.R."/>
            <person name="Creasy T.H."/>
            <person name="Dewar K."/>
            <person name="Dunn P."/>
            <person name="Etgu P."/>
            <person name="Feldblyum T.V."/>
            <person name="Feng J.-D."/>
            <person name="Fong B."/>
            <person name="Fujii C.Y."/>
            <person name="Gill J.E."/>
            <person name="Goldsmith A.D."/>
            <person name="Haas B."/>
            <person name="Hansen N.F."/>
            <person name="Hughes B."/>
            <person name="Huizar L."/>
            <person name="Hunter J.L."/>
            <person name="Jenkins J."/>
            <person name="Johnson-Hopson C."/>
            <person name="Khan S."/>
            <person name="Khaykin E."/>
            <person name="Kim C.J."/>
            <person name="Koo H.L."/>
            <person name="Kremenetskaia I."/>
            <person name="Kurtz D.B."/>
            <person name="Kwan A."/>
            <person name="Lam B."/>
            <person name="Langin-Hooper S."/>
            <person name="Lee A."/>
            <person name="Lee J.M."/>
            <person name="Lenz C.A."/>
            <person name="Li J.H."/>
            <person name="Li Y.-P."/>
            <person name="Lin X."/>
            <person name="Liu S.X."/>
            <person name="Liu Z.A."/>
            <person name="Luros J.S."/>
            <person name="Maiti R."/>
            <person name="Marziali A."/>
            <person name="Militscher J."/>
            <person name="Miranda M."/>
            <person name="Nguyen M."/>
            <person name="Nierman W.C."/>
            <person name="Osborne B.I."/>
            <person name="Pai G."/>
            <person name="Peterson J."/>
            <person name="Pham P.K."/>
            <person name="Rizzo M."/>
            <person name="Rooney T."/>
            <person name="Rowley D."/>
            <person name="Sakano H."/>
            <person name="Salzberg S.L."/>
            <person name="Schwartz J.R."/>
            <person name="Shinn P."/>
            <person name="Southwick A.M."/>
            <person name="Sun H."/>
            <person name="Tallon L.J."/>
            <person name="Tambunga G."/>
            <person name="Toriumi M.J."/>
            <person name="Town C.D."/>
            <person name="Utterback T."/>
            <person name="Van Aken S."/>
            <person name="Vaysberg M."/>
            <person name="Vysotskaia V.S."/>
            <person name="Walker M."/>
            <person name="Wu D."/>
            <person name="Yu G."/>
            <person name="Fraser C.M."/>
            <person name="Venter J.C."/>
            <person name="Davis R.W."/>
        </authorList>
    </citation>
    <scope>NUCLEOTIDE SEQUENCE [LARGE SCALE GENOMIC DNA]</scope>
    <source>
        <strain>cv. Columbia</strain>
    </source>
</reference>
<reference key="3">
    <citation type="journal article" date="2017" name="Plant J.">
        <title>Araport11: a complete reannotation of the Arabidopsis thaliana reference genome.</title>
        <authorList>
            <person name="Cheng C.Y."/>
            <person name="Krishnakumar V."/>
            <person name="Chan A.P."/>
            <person name="Thibaud-Nissen F."/>
            <person name="Schobel S."/>
            <person name="Town C.D."/>
        </authorList>
    </citation>
    <scope>GENOME REANNOTATION</scope>
    <source>
        <strain>cv. Columbia</strain>
    </source>
</reference>
<reference key="4">
    <citation type="journal article" date="2002" name="J. Biol. Chem.">
        <title>A novel family of calmodulin-binding transcription activators in multicellular organisms.</title>
        <authorList>
            <person name="Bouche N."/>
            <person name="Scharlat A."/>
            <person name="Snedden W."/>
            <person name="Bouchez D."/>
            <person name="Fromm H."/>
        </authorList>
    </citation>
    <scope>FUNCTION</scope>
    <scope>GENE FAMILY</scope>
    <scope>NOMENCLATURE</scope>
</reference>
<reference key="5">
    <citation type="journal article" date="2002" name="J. Biol. Chem.">
        <title>A calmodulin-binding/CGCG box DNA-binding protein family involved in multiple signaling pathways in plants.</title>
        <authorList>
            <person name="Yang T."/>
            <person name="Poovaiah B.W."/>
        </authorList>
    </citation>
    <scope>TISSUE SPECIFICITY</scope>
    <scope>INDUCTION</scope>
</reference>
<reference key="6">
    <citation type="journal article" date="2000" name="Biochem. Biophys. Res. Commun.">
        <title>A calmodulin binding protein from Arabidopsis is induced by ethylene and contains a DNA-binding motif.</title>
        <authorList>
            <person name="Reddy A.S.N."/>
            <person name="Reddy V.S."/>
            <person name="Golovkin M."/>
        </authorList>
    </citation>
    <scope>IDENTIFICATION</scope>
</reference>
<reference key="7">
    <citation type="journal article" date="2002" name="J. Biol. Chem.">
        <title>Genes encoding calmodulin-binding proteins in the Arabidopsis genome.</title>
        <authorList>
            <person name="Reddy V.S."/>
            <person name="Ali G.S."/>
            <person name="Reddy A.S.N."/>
        </authorList>
    </citation>
    <scope>IDENTIFICATION</scope>
</reference>
<reference key="8">
    <citation type="journal article" date="2008" name="J. Proteome Res.">
        <title>Site-specific phosphorylation profiling of Arabidopsis proteins by mass spectrometry and peptide chip analysis.</title>
        <authorList>
            <person name="de la Fuente van Bentem S."/>
            <person name="Anrather D."/>
            <person name="Dohnal I."/>
            <person name="Roitinger E."/>
            <person name="Csaszar E."/>
            <person name="Joore J."/>
            <person name="Buijnink J."/>
            <person name="Carreri A."/>
            <person name="Forzani C."/>
            <person name="Lorkovic Z.J."/>
            <person name="Barta A."/>
            <person name="Lecourieux D."/>
            <person name="Verhounig A."/>
            <person name="Jonak C."/>
            <person name="Hirt H."/>
        </authorList>
    </citation>
    <scope>PHOSPHORYLATION [LARGE SCALE ANALYSIS] AT SER-935</scope>
    <scope>IDENTIFICATION BY MASS SPECTROMETRY [LARGE SCALE ANALYSIS]</scope>
    <source>
        <tissue>Root</tissue>
    </source>
</reference>
<reference key="9">
    <citation type="journal article" date="2009" name="J. Proteomics">
        <title>Phosphoproteomic analysis of nuclei-enriched fractions from Arabidopsis thaliana.</title>
        <authorList>
            <person name="Jones A.M.E."/>
            <person name="MacLean D."/>
            <person name="Studholme D.J."/>
            <person name="Serna-Sanz A."/>
            <person name="Andreasson E."/>
            <person name="Rathjen J.P."/>
            <person name="Peck S.C."/>
        </authorList>
    </citation>
    <scope>SUBCELLULAR LOCATION</scope>
    <scope>PHOSPHORYLATION [LARGE SCALE ANALYSIS] AT SER-935</scope>
    <scope>IDENTIFICATION BY MASS SPECTROMETRY [LARGE SCALE ANALYSIS]</scope>
    <source>
        <strain>cv. Columbia</strain>
    </source>
</reference>
<reference key="10">
    <citation type="journal article" date="2009" name="Plant Physiol.">
        <title>Large-scale Arabidopsis phosphoproteome profiling reveals novel chloroplast kinase substrates and phosphorylation networks.</title>
        <authorList>
            <person name="Reiland S."/>
            <person name="Messerli G."/>
            <person name="Baerenfaller K."/>
            <person name="Gerrits B."/>
            <person name="Endler A."/>
            <person name="Grossmann J."/>
            <person name="Gruissem W."/>
            <person name="Baginsky S."/>
        </authorList>
    </citation>
    <scope>PHOSPHORYLATION [LARGE SCALE ANALYSIS] AT SER-962</scope>
    <scope>IDENTIFICATION BY MASS SPECTROMETRY [LARGE SCALE ANALYSIS]</scope>
</reference>
<reference key="11">
    <citation type="journal article" date="2014" name="Plant J.">
        <title>A key general stress response motif is regulated non-uniformly by CAMTA transcription factors.</title>
        <authorList>
            <person name="Benn G."/>
            <person name="Wang C.Q."/>
            <person name="Hicks D.R."/>
            <person name="Stein J."/>
            <person name="Guthrie C."/>
            <person name="Dehesh K."/>
        </authorList>
    </citation>
    <scope>FUNCTION</scope>
</reference>
<reference key="12">
    <citation type="journal article" date="2017" name="Plant Cell">
        <title>Different cold-signaling pathways function in the responses to rapid and gradual decreases in temperature.</title>
        <authorList>
            <person name="Kidokoro S."/>
            <person name="Yoneda K."/>
            <person name="Takasaki H."/>
            <person name="Takahashi F."/>
            <person name="Shinozaki K."/>
            <person name="Yamaguchi-Shinozaki K."/>
        </authorList>
    </citation>
    <scope>INDUCTION BY COLD</scope>
</reference>
<keyword id="KW-0010">Activator</keyword>
<keyword id="KW-0040">ANK repeat</keyword>
<keyword id="KW-0106">Calcium</keyword>
<keyword id="KW-0112">Calmodulin-binding</keyword>
<keyword id="KW-0238">DNA-binding</keyword>
<keyword id="KW-0539">Nucleus</keyword>
<keyword id="KW-0597">Phosphoprotein</keyword>
<keyword id="KW-1185">Reference proteome</keyword>
<keyword id="KW-0677">Repeat</keyword>
<keyword id="KW-0346">Stress response</keyword>
<keyword id="KW-0804">Transcription</keyword>
<keyword id="KW-0805">Transcription regulation</keyword>
<sequence>MSSVAEDNSFTCDIATIFVAICRNPPANPSDSLFQYEISTLYQEAHSRWLKPPEVLFILQNHESLTLTNTAPQRPTSGSLLLFNKRVLKFFRKDGHQWRRKRDGRAIAEAHERLKVGNAEALNCYYAHGEQDPTFRRRIYWMLDPEYEHIVLVHYRDVSEREEGQQTGGQVYQFAPILSTQNVSYNQYIGDSSDIYQQSSTSPGVAEVNSNLEGSASSSEFGQALKMLKEQLSIGDEHVNSVDPHYIQPESLDSLQFLEYSDIDHLAQPTTVYQRPENNKLERCYGGNFGAQYSAKNDSNKLERCYGGYVGGAEYHSSNLMLVKNGSGPSGGTGGSGDQGSESWKDVLEACEASIPLNSEGSTPSSAKGLLAGLQEDSNWSYSNQVDQSTFLLPQDLGSFQLPASYSALVAPENNGEYCGMMEDGMKIGLPFEQEMRVTGAHNQKFTIQDISPDWGYANETTKVIIIGSFLCDPTESTWSCMFGNAQVPFEIIKEGVIRCEAPQCGPGKVNLCITSGDGLLCSEIREFEYREKPDTCCPKCSEPQTSDMSTSPNELILLVRFVQTLLSDRSSERKSNLESGNDKLLTKLKADDDQWRHVIGTIIDGSASSTSTVDWLLQELLKDKLDTWLSSRSCDEDYITCSLSKQEQGIIHMVAGLGFEWAFYPILAHGVNVDFRDIKGWSALHWAAQFGSEKMVAALIASGASAGAVTDPSRQDPNGKTAASIAASNGHKGLAGYLSEVALTNHLSSLTLEETENSKDTAQVQTEKTLNSISEQSPSGNEDQVSLKDTLAAVRNAAQAAARIQAAFRAHSFRKRKQREAALVACLQEYGMYCEDIEGISAMSKLTFGKGRNYNSAALSIQKNFRGYKDRKCFLELRQKVVKIQAHVRGYQIRKNYKVICWAVRILDKVVLRWRRKGVGLRGFRQDVESTEDSEDEDILKVFRKQKVDVAVNEAFSRVLSMSNSPEARQQYHRVLKRYCQTKAELGKTETLVGEDDDGLFDIADMEYDTLFSLP</sequence>
<accession>Q9FYG2</accession>
<name>CMTA4_ARATH</name>
<evidence type="ECO:0000250" key="1">
    <source>
        <dbReference type="UniProtKB" id="Q8GSA7"/>
    </source>
</evidence>
<evidence type="ECO:0000250" key="2">
    <source>
        <dbReference type="UniProtKB" id="Q9FY74"/>
    </source>
</evidence>
<evidence type="ECO:0000255" key="3">
    <source>
        <dbReference type="PROSITE-ProRule" id="PRU00116"/>
    </source>
</evidence>
<evidence type="ECO:0000255" key="4">
    <source>
        <dbReference type="PROSITE-ProRule" id="PRU00767"/>
    </source>
</evidence>
<evidence type="ECO:0000256" key="5">
    <source>
        <dbReference type="SAM" id="MobiDB-lite"/>
    </source>
</evidence>
<evidence type="ECO:0000269" key="6">
    <source>
    </source>
</evidence>
<evidence type="ECO:0000269" key="7">
    <source>
    </source>
</evidence>
<evidence type="ECO:0000269" key="8">
    <source>
    </source>
</evidence>
<evidence type="ECO:0000269" key="9">
    <source>
    </source>
</evidence>
<evidence type="ECO:0000303" key="10">
    <source>
    </source>
</evidence>
<evidence type="ECO:0000303" key="11">
    <source>
    </source>
</evidence>
<evidence type="ECO:0000303" key="12">
    <source>
    </source>
</evidence>
<evidence type="ECO:0000303" key="13">
    <source>
    </source>
</evidence>
<evidence type="ECO:0000305" key="14"/>
<evidence type="ECO:0000305" key="15">
    <source>
    </source>
</evidence>
<evidence type="ECO:0000312" key="16">
    <source>
        <dbReference type="Araport" id="AT1G67310"/>
    </source>
</evidence>
<evidence type="ECO:0000312" key="17">
    <source>
        <dbReference type="EMBL" id="AAG00250.1"/>
    </source>
</evidence>
<evidence type="ECO:0000312" key="18">
    <source>
        <dbReference type="EMBL" id="AAR98747.1"/>
    </source>
</evidence>
<evidence type="ECO:0007744" key="19">
    <source>
    </source>
</evidence>
<evidence type="ECO:0007744" key="20">
    <source>
    </source>
</evidence>
<evidence type="ECO:0007744" key="21">
    <source>
    </source>
</evidence>
<organism>
    <name type="scientific">Arabidopsis thaliana</name>
    <name type="common">Mouse-ear cress</name>
    <dbReference type="NCBI Taxonomy" id="3702"/>
    <lineage>
        <taxon>Eukaryota</taxon>
        <taxon>Viridiplantae</taxon>
        <taxon>Streptophyta</taxon>
        <taxon>Embryophyta</taxon>
        <taxon>Tracheophyta</taxon>
        <taxon>Spermatophyta</taxon>
        <taxon>Magnoliopsida</taxon>
        <taxon>eudicotyledons</taxon>
        <taxon>Gunneridae</taxon>
        <taxon>Pentapetalae</taxon>
        <taxon>rosids</taxon>
        <taxon>malvids</taxon>
        <taxon>Brassicales</taxon>
        <taxon>Brassicaceae</taxon>
        <taxon>Camelineae</taxon>
        <taxon>Arabidopsis</taxon>
    </lineage>
</organism>
<proteinExistence type="evidence at protein level"/>
<gene>
    <name evidence="12" type="primary">CAMTA4</name>
    <name evidence="14" type="synonym">CMTA4</name>
    <name evidence="13" type="synonym">SR5</name>
    <name evidence="16" type="ordered locus">At1g67310</name>
    <name evidence="17" type="ORF">F1N21.13</name>
</gene>
<feature type="chain" id="PRO_0000114489" description="Calmodulin-binding transcription activator 4">
    <location>
        <begin position="1"/>
        <end position="1016"/>
    </location>
</feature>
<feature type="repeat" description="ANK 1">
    <location>
        <begin position="647"/>
        <end position="676"/>
    </location>
</feature>
<feature type="repeat" description="ANK 2">
    <location>
        <begin position="680"/>
        <end position="709"/>
    </location>
</feature>
<feature type="repeat" description="ANK 3">
    <location>
        <begin position="719"/>
        <end position="748"/>
    </location>
</feature>
<feature type="domain" description="IQ 1" evidence="3">
    <location>
        <begin position="798"/>
        <end position="827"/>
    </location>
</feature>
<feature type="domain" description="IQ 2" evidence="3">
    <location>
        <begin position="855"/>
        <end position="884"/>
    </location>
</feature>
<feature type="domain" description="IQ 3" evidence="3">
    <location>
        <begin position="878"/>
        <end position="907"/>
    </location>
</feature>
<feature type="DNA-binding region" description="CG-1" evidence="4">
    <location>
        <begin position="38"/>
        <end position="164"/>
    </location>
</feature>
<feature type="region of interest" description="Disordered" evidence="5">
    <location>
        <begin position="324"/>
        <end position="343"/>
    </location>
</feature>
<feature type="region of interest" description="Disordered" evidence="5">
    <location>
        <begin position="753"/>
        <end position="786"/>
    </location>
</feature>
<feature type="region of interest" description="Calmodulin-binding" evidence="2">
    <location>
        <begin position="903"/>
        <end position="925"/>
    </location>
</feature>
<feature type="compositionally biased region" description="Gly residues" evidence="5">
    <location>
        <begin position="328"/>
        <end position="338"/>
    </location>
</feature>
<feature type="compositionally biased region" description="Polar residues" evidence="5">
    <location>
        <begin position="761"/>
        <end position="785"/>
    </location>
</feature>
<feature type="modified residue" description="Phosphoserine" evidence="19 20">
    <location>
        <position position="935"/>
    </location>
</feature>
<feature type="modified residue" description="Phosphoserine" evidence="21">
    <location>
        <position position="962"/>
    </location>
</feature>
<comment type="function">
    <text evidence="1 8 15">Transcription activator that binds to the DNA consensus sequence 5'-[ACG]CGCG[GTC]-3' (By similarity). Regulates transcriptional activity in response to calcium signals (Probable). Binds calmodulin in a calcium-dependent manner (By similarity). Involved together with CAMTA2 and CAMTA3 in the positive regulation of a general stress response (PubMed:25039701).</text>
</comment>
<comment type="subcellular location">
    <subcellularLocation>
        <location evidence="4 7">Nucleus</location>
    </subcellularLocation>
</comment>
<comment type="tissue specificity">
    <text evidence="6">Expressed in roots, stems, leaves, flowers and siliques.</text>
</comment>
<comment type="induction">
    <text evidence="6 9">By heat shock, UVB, salt, wounding, ethylene, methyl jasmonate, abscisic acid, H(2)O(2) and salicylic acid (PubMed:12218065). Induced by cold stress (PubMed:28351986).</text>
</comment>
<comment type="similarity">
    <text evidence="14">Belongs to the CAMTA family.</text>
</comment>
<dbReference type="EMBL" id="AY510026">
    <property type="protein sequence ID" value="AAR98747.1"/>
    <property type="molecule type" value="mRNA"/>
</dbReference>
<dbReference type="EMBL" id="AC002130">
    <property type="protein sequence ID" value="AAG00250.1"/>
    <property type="molecule type" value="Genomic_DNA"/>
</dbReference>
<dbReference type="EMBL" id="CP002684">
    <property type="protein sequence ID" value="AEE34626.1"/>
    <property type="molecule type" value="Genomic_DNA"/>
</dbReference>
<dbReference type="RefSeq" id="NP_176899.2">
    <property type="nucleotide sequence ID" value="NM_105399.2"/>
</dbReference>
<dbReference type="SMR" id="Q9FYG2"/>
<dbReference type="BioGRID" id="28272">
    <property type="interactions" value="1"/>
</dbReference>
<dbReference type="FunCoup" id="Q9FYG2">
    <property type="interactions" value="1693"/>
</dbReference>
<dbReference type="STRING" id="3702.Q9FYG2"/>
<dbReference type="GlyGen" id="Q9FYG2">
    <property type="glycosylation" value="1 site"/>
</dbReference>
<dbReference type="iPTMnet" id="Q9FYG2"/>
<dbReference type="PaxDb" id="3702-AT1G67310.1"/>
<dbReference type="ProteomicsDB" id="241235"/>
<dbReference type="EnsemblPlants" id="AT1G67310.1">
    <property type="protein sequence ID" value="AT1G67310.1"/>
    <property type="gene ID" value="AT1G67310"/>
</dbReference>
<dbReference type="GeneID" id="843051"/>
<dbReference type="Gramene" id="AT1G67310.1">
    <property type="protein sequence ID" value="AT1G67310.1"/>
    <property type="gene ID" value="AT1G67310"/>
</dbReference>
<dbReference type="KEGG" id="ath:AT1G67310"/>
<dbReference type="Araport" id="AT1G67310"/>
<dbReference type="TAIR" id="AT1G67310"/>
<dbReference type="eggNOG" id="KOG0520">
    <property type="taxonomic scope" value="Eukaryota"/>
</dbReference>
<dbReference type="HOGENOM" id="CLU_005708_1_0_1"/>
<dbReference type="InParanoid" id="Q9FYG2"/>
<dbReference type="OMA" id="ESAWACM"/>
<dbReference type="PhylomeDB" id="Q9FYG2"/>
<dbReference type="PRO" id="PR:Q9FYG2"/>
<dbReference type="Proteomes" id="UP000006548">
    <property type="component" value="Chromosome 1"/>
</dbReference>
<dbReference type="ExpressionAtlas" id="Q9FYG2">
    <property type="expression patterns" value="baseline and differential"/>
</dbReference>
<dbReference type="GO" id="GO:0005634">
    <property type="term" value="C:nucleus"/>
    <property type="evidence" value="ECO:0000314"/>
    <property type="project" value="UniProtKB"/>
</dbReference>
<dbReference type="GO" id="GO:0005516">
    <property type="term" value="F:calmodulin binding"/>
    <property type="evidence" value="ECO:0007669"/>
    <property type="project" value="UniProtKB-KW"/>
</dbReference>
<dbReference type="GO" id="GO:0003677">
    <property type="term" value="F:DNA binding"/>
    <property type="evidence" value="ECO:0007669"/>
    <property type="project" value="UniProtKB-KW"/>
</dbReference>
<dbReference type="GO" id="GO:0006355">
    <property type="term" value="P:regulation of DNA-templated transcription"/>
    <property type="evidence" value="ECO:0000304"/>
    <property type="project" value="TAIR"/>
</dbReference>
<dbReference type="CDD" id="cd00102">
    <property type="entry name" value="IPT"/>
    <property type="match status" value="1"/>
</dbReference>
<dbReference type="FunFam" id="1.20.5.190:FF:000003">
    <property type="entry name" value="Calmodulin-binding transcription activator 2"/>
    <property type="match status" value="1"/>
</dbReference>
<dbReference type="FunFam" id="1.25.40.20:FF:000411">
    <property type="entry name" value="Calmodulin-binding transcription activator 4 isoform A"/>
    <property type="match status" value="1"/>
</dbReference>
<dbReference type="Gene3D" id="1.20.5.190">
    <property type="match status" value="1"/>
</dbReference>
<dbReference type="Gene3D" id="1.25.40.20">
    <property type="entry name" value="Ankyrin repeat-containing domain"/>
    <property type="match status" value="1"/>
</dbReference>
<dbReference type="Gene3D" id="2.60.40.10">
    <property type="entry name" value="Immunoglobulins"/>
    <property type="match status" value="1"/>
</dbReference>
<dbReference type="InterPro" id="IPR002110">
    <property type="entry name" value="Ankyrin_rpt"/>
</dbReference>
<dbReference type="InterPro" id="IPR036770">
    <property type="entry name" value="Ankyrin_rpt-contain_sf"/>
</dbReference>
<dbReference type="InterPro" id="IPR005559">
    <property type="entry name" value="CG-1_dom"/>
</dbReference>
<dbReference type="InterPro" id="IPR013783">
    <property type="entry name" value="Ig-like_fold"/>
</dbReference>
<dbReference type="InterPro" id="IPR014756">
    <property type="entry name" value="Ig_E-set"/>
</dbReference>
<dbReference type="InterPro" id="IPR002909">
    <property type="entry name" value="IPT_dom"/>
</dbReference>
<dbReference type="InterPro" id="IPR000048">
    <property type="entry name" value="IQ_motif_EF-hand-BS"/>
</dbReference>
<dbReference type="InterPro" id="IPR027417">
    <property type="entry name" value="P-loop_NTPase"/>
</dbReference>
<dbReference type="PANTHER" id="PTHR23335">
    <property type="entry name" value="CALMODULIN-BINDING TRANSCRIPTION ACTIVATOR CAMTA"/>
    <property type="match status" value="1"/>
</dbReference>
<dbReference type="PANTHER" id="PTHR23335:SF1">
    <property type="entry name" value="CALMODULIN-BINDING TRANSCRIPTION ACTIVATOR, ISOFORM F"/>
    <property type="match status" value="1"/>
</dbReference>
<dbReference type="Pfam" id="PF12796">
    <property type="entry name" value="Ank_2"/>
    <property type="match status" value="1"/>
</dbReference>
<dbReference type="Pfam" id="PF03859">
    <property type="entry name" value="CG-1"/>
    <property type="match status" value="1"/>
</dbReference>
<dbReference type="Pfam" id="PF00612">
    <property type="entry name" value="IQ"/>
    <property type="match status" value="2"/>
</dbReference>
<dbReference type="Pfam" id="PF01833">
    <property type="entry name" value="TIG"/>
    <property type="match status" value="1"/>
</dbReference>
<dbReference type="SMART" id="SM00248">
    <property type="entry name" value="ANK"/>
    <property type="match status" value="2"/>
</dbReference>
<dbReference type="SMART" id="SM01076">
    <property type="entry name" value="CG-1"/>
    <property type="match status" value="1"/>
</dbReference>
<dbReference type="SMART" id="SM00015">
    <property type="entry name" value="IQ"/>
    <property type="match status" value="3"/>
</dbReference>
<dbReference type="SUPFAM" id="SSF48403">
    <property type="entry name" value="Ankyrin repeat"/>
    <property type="match status" value="1"/>
</dbReference>
<dbReference type="SUPFAM" id="SSF81296">
    <property type="entry name" value="E set domains"/>
    <property type="match status" value="1"/>
</dbReference>
<dbReference type="SUPFAM" id="SSF52540">
    <property type="entry name" value="P-loop containing nucleoside triphosphate hydrolases"/>
    <property type="match status" value="1"/>
</dbReference>
<dbReference type="PROSITE" id="PS50297">
    <property type="entry name" value="ANK_REP_REGION"/>
    <property type="match status" value="1"/>
</dbReference>
<dbReference type="PROSITE" id="PS50088">
    <property type="entry name" value="ANK_REPEAT"/>
    <property type="match status" value="1"/>
</dbReference>
<dbReference type="PROSITE" id="PS51437">
    <property type="entry name" value="CG_1"/>
    <property type="match status" value="1"/>
</dbReference>
<dbReference type="PROSITE" id="PS50096">
    <property type="entry name" value="IQ"/>
    <property type="match status" value="3"/>
</dbReference>